<proteinExistence type="inferred from homology"/>
<comment type="function">
    <text evidence="1">Catalyzes the last two sequential reactions in the de novo biosynthetic pathway for UDP-N-acetylglucosamine (UDP-GlcNAc). The C-terminal domain catalyzes the transfer of acetyl group from acetyl coenzyme A to glucosamine-1-phosphate (GlcN-1-P) to produce N-acetylglucosamine-1-phosphate (GlcNAc-1-P), which is converted into UDP-GlcNAc by the transfer of uridine 5-monophosphate (from uridine 5-triphosphate), a reaction catalyzed by the N-terminal domain.</text>
</comment>
<comment type="catalytic activity">
    <reaction evidence="1">
        <text>alpha-D-glucosamine 1-phosphate + acetyl-CoA = N-acetyl-alpha-D-glucosamine 1-phosphate + CoA + H(+)</text>
        <dbReference type="Rhea" id="RHEA:13725"/>
        <dbReference type="ChEBI" id="CHEBI:15378"/>
        <dbReference type="ChEBI" id="CHEBI:57287"/>
        <dbReference type="ChEBI" id="CHEBI:57288"/>
        <dbReference type="ChEBI" id="CHEBI:57776"/>
        <dbReference type="ChEBI" id="CHEBI:58516"/>
        <dbReference type="EC" id="2.3.1.157"/>
    </reaction>
</comment>
<comment type="catalytic activity">
    <reaction evidence="1">
        <text>N-acetyl-alpha-D-glucosamine 1-phosphate + UTP + H(+) = UDP-N-acetyl-alpha-D-glucosamine + diphosphate</text>
        <dbReference type="Rhea" id="RHEA:13509"/>
        <dbReference type="ChEBI" id="CHEBI:15378"/>
        <dbReference type="ChEBI" id="CHEBI:33019"/>
        <dbReference type="ChEBI" id="CHEBI:46398"/>
        <dbReference type="ChEBI" id="CHEBI:57705"/>
        <dbReference type="ChEBI" id="CHEBI:57776"/>
        <dbReference type="EC" id="2.7.7.23"/>
    </reaction>
</comment>
<comment type="cofactor">
    <cofactor evidence="1">
        <name>Mg(2+)</name>
        <dbReference type="ChEBI" id="CHEBI:18420"/>
    </cofactor>
    <text evidence="1">Binds 1 Mg(2+) ion per subunit.</text>
</comment>
<comment type="pathway">
    <text evidence="1">Nucleotide-sugar biosynthesis; UDP-N-acetyl-alpha-D-glucosamine biosynthesis; N-acetyl-alpha-D-glucosamine 1-phosphate from alpha-D-glucosamine 6-phosphate (route II): step 2/2.</text>
</comment>
<comment type="pathway">
    <text evidence="1">Nucleotide-sugar biosynthesis; UDP-N-acetyl-alpha-D-glucosamine biosynthesis; UDP-N-acetyl-alpha-D-glucosamine from N-acetyl-alpha-D-glucosamine 1-phosphate: step 1/1.</text>
</comment>
<comment type="pathway">
    <text evidence="1">Bacterial outer membrane biogenesis; LPS lipid A biosynthesis.</text>
</comment>
<comment type="subunit">
    <text evidence="1">Homotrimer.</text>
</comment>
<comment type="subcellular location">
    <subcellularLocation>
        <location evidence="1">Cytoplasm</location>
    </subcellularLocation>
</comment>
<comment type="similarity">
    <text evidence="1">In the N-terminal section; belongs to the N-acetylglucosamine-1-phosphate uridyltransferase family.</text>
</comment>
<comment type="similarity">
    <text evidence="1">In the C-terminal section; belongs to the transferase hexapeptide repeat family.</text>
</comment>
<evidence type="ECO:0000255" key="1">
    <source>
        <dbReference type="HAMAP-Rule" id="MF_01631"/>
    </source>
</evidence>
<reference key="1">
    <citation type="journal article" date="2007" name="Proc. Natl. Acad. Sci. U.S.A.">
        <title>Deep-sea vent epsilon-proteobacterial genomes provide insights into emergence of pathogens.</title>
        <authorList>
            <person name="Nakagawa S."/>
            <person name="Takaki Y."/>
            <person name="Shimamura S."/>
            <person name="Reysenbach A.-L."/>
            <person name="Takai K."/>
            <person name="Horikoshi K."/>
        </authorList>
    </citation>
    <scope>NUCLEOTIDE SEQUENCE [LARGE SCALE GENOMIC DNA]</scope>
    <source>
        <strain>SB155-2</strain>
    </source>
</reference>
<protein>
    <recommendedName>
        <fullName evidence="1">Bifunctional protein GlmU</fullName>
    </recommendedName>
    <domain>
        <recommendedName>
            <fullName evidence="1">UDP-N-acetylglucosamine pyrophosphorylase</fullName>
            <ecNumber evidence="1">2.7.7.23</ecNumber>
        </recommendedName>
        <alternativeName>
            <fullName evidence="1">N-acetylglucosamine-1-phosphate uridyltransferase</fullName>
        </alternativeName>
    </domain>
    <domain>
        <recommendedName>
            <fullName evidence="1">Glucosamine-1-phosphate N-acetyltransferase</fullName>
            <ecNumber evidence="1">2.3.1.157</ecNumber>
        </recommendedName>
    </domain>
</protein>
<organism>
    <name type="scientific">Nitratiruptor sp. (strain SB155-2)</name>
    <dbReference type="NCBI Taxonomy" id="387092"/>
    <lineage>
        <taxon>Bacteria</taxon>
        <taxon>Pseudomonadati</taxon>
        <taxon>Campylobacterota</taxon>
        <taxon>Epsilonproteobacteria</taxon>
        <taxon>Nautiliales</taxon>
        <taxon>Nitratiruptoraceae</taxon>
        <taxon>Nitratiruptor</taxon>
    </lineage>
</organism>
<gene>
    <name evidence="1" type="primary">glmU</name>
    <name type="ordered locus">NIS_1103</name>
</gene>
<keyword id="KW-0012">Acyltransferase</keyword>
<keyword id="KW-0133">Cell shape</keyword>
<keyword id="KW-0961">Cell wall biogenesis/degradation</keyword>
<keyword id="KW-0963">Cytoplasm</keyword>
<keyword id="KW-0460">Magnesium</keyword>
<keyword id="KW-0479">Metal-binding</keyword>
<keyword id="KW-0511">Multifunctional enzyme</keyword>
<keyword id="KW-0548">Nucleotidyltransferase</keyword>
<keyword id="KW-0573">Peptidoglycan synthesis</keyword>
<keyword id="KW-1185">Reference proteome</keyword>
<keyword id="KW-0677">Repeat</keyword>
<keyword id="KW-0808">Transferase</keyword>
<feature type="chain" id="PRO_1000056177" description="Bifunctional protein GlmU">
    <location>
        <begin position="1"/>
        <end position="430"/>
    </location>
</feature>
<feature type="region of interest" description="Pyrophosphorylase" evidence="1">
    <location>
        <begin position="1"/>
        <end position="223"/>
    </location>
</feature>
<feature type="region of interest" description="Linker" evidence="1">
    <location>
        <begin position="224"/>
        <end position="244"/>
    </location>
</feature>
<feature type="region of interest" description="N-acetyltransferase" evidence="1">
    <location>
        <begin position="245"/>
        <end position="430"/>
    </location>
</feature>
<feature type="active site" description="Proton acceptor" evidence="1">
    <location>
        <position position="336"/>
    </location>
</feature>
<feature type="binding site" evidence="1">
    <location>
        <begin position="8"/>
        <end position="11"/>
    </location>
    <ligand>
        <name>UDP-N-acetyl-alpha-D-glucosamine</name>
        <dbReference type="ChEBI" id="CHEBI:57705"/>
    </ligand>
</feature>
<feature type="binding site" evidence="1">
    <location>
        <position position="22"/>
    </location>
    <ligand>
        <name>UDP-N-acetyl-alpha-D-glucosamine</name>
        <dbReference type="ChEBI" id="CHEBI:57705"/>
    </ligand>
</feature>
<feature type="binding site" evidence="1">
    <location>
        <begin position="81"/>
        <end position="82"/>
    </location>
    <ligand>
        <name>UDP-N-acetyl-alpha-D-glucosamine</name>
        <dbReference type="ChEBI" id="CHEBI:57705"/>
    </ligand>
</feature>
<feature type="binding site" evidence="1">
    <location>
        <position position="102"/>
    </location>
    <ligand>
        <name>Mg(2+)</name>
        <dbReference type="ChEBI" id="CHEBI:18420"/>
    </ligand>
</feature>
<feature type="binding site" evidence="1">
    <location>
        <position position="135"/>
    </location>
    <ligand>
        <name>UDP-N-acetyl-alpha-D-glucosamine</name>
        <dbReference type="ChEBI" id="CHEBI:57705"/>
    </ligand>
</feature>
<feature type="binding site" evidence="1">
    <location>
        <position position="149"/>
    </location>
    <ligand>
        <name>UDP-N-acetyl-alpha-D-glucosamine</name>
        <dbReference type="ChEBI" id="CHEBI:57705"/>
    </ligand>
</feature>
<feature type="binding site" evidence="1">
    <location>
        <position position="164"/>
    </location>
    <ligand>
        <name>UDP-N-acetyl-alpha-D-glucosamine</name>
        <dbReference type="ChEBI" id="CHEBI:57705"/>
    </ligand>
</feature>
<feature type="binding site" evidence="1">
    <location>
        <position position="221"/>
    </location>
    <ligand>
        <name>Mg(2+)</name>
        <dbReference type="ChEBI" id="CHEBI:18420"/>
    </ligand>
</feature>
<feature type="binding site" evidence="1">
    <location>
        <position position="221"/>
    </location>
    <ligand>
        <name>UDP-N-acetyl-alpha-D-glucosamine</name>
        <dbReference type="ChEBI" id="CHEBI:57705"/>
    </ligand>
</feature>
<feature type="binding site" evidence="1">
    <location>
        <position position="308"/>
    </location>
    <ligand>
        <name>UDP-N-acetyl-alpha-D-glucosamine</name>
        <dbReference type="ChEBI" id="CHEBI:57705"/>
    </ligand>
</feature>
<feature type="binding site" evidence="1">
    <location>
        <position position="325"/>
    </location>
    <ligand>
        <name>UDP-N-acetyl-alpha-D-glucosamine</name>
        <dbReference type="ChEBI" id="CHEBI:57705"/>
    </ligand>
</feature>
<feature type="binding site" evidence="1">
    <location>
        <position position="339"/>
    </location>
    <ligand>
        <name>UDP-N-acetyl-alpha-D-glucosamine</name>
        <dbReference type="ChEBI" id="CHEBI:57705"/>
    </ligand>
</feature>
<feature type="binding site" evidence="1">
    <location>
        <position position="350"/>
    </location>
    <ligand>
        <name>UDP-N-acetyl-alpha-D-glucosamine</name>
        <dbReference type="ChEBI" id="CHEBI:57705"/>
    </ligand>
</feature>
<feature type="binding site" evidence="1">
    <location>
        <position position="353"/>
    </location>
    <ligand>
        <name>acetyl-CoA</name>
        <dbReference type="ChEBI" id="CHEBI:57288"/>
    </ligand>
</feature>
<feature type="binding site" evidence="1">
    <location>
        <begin position="359"/>
        <end position="360"/>
    </location>
    <ligand>
        <name>acetyl-CoA</name>
        <dbReference type="ChEBI" id="CHEBI:57288"/>
    </ligand>
</feature>
<feature type="binding site" evidence="1">
    <location>
        <position position="378"/>
    </location>
    <ligand>
        <name>acetyl-CoA</name>
        <dbReference type="ChEBI" id="CHEBI:57288"/>
    </ligand>
</feature>
<feature type="binding site" evidence="1">
    <location>
        <position position="396"/>
    </location>
    <ligand>
        <name>acetyl-CoA</name>
        <dbReference type="ChEBI" id="CHEBI:57288"/>
    </ligand>
</feature>
<feature type="binding site" evidence="1">
    <location>
        <position position="413"/>
    </location>
    <ligand>
        <name>acetyl-CoA</name>
        <dbReference type="ChEBI" id="CHEBI:57288"/>
    </ligand>
</feature>
<sequence length="430" mass="48221">MSFSVVILAAGQGTRMKSSLPKVLHTICGRPMIWHIIKEAQKISDDITVILYHQAEIIKEYIQKEFDGIRFVLQDHKNYPGTGGALRNIYFSNEKILVLNGDMPLIQAKTLKNFISIDADIVLSVIRMEDPCGYGRVIIKNDEVEYIVEQKDANEEELAVCNVNAGVYLFKKNLLEQFLPKLTNDNAQKEYYLTDIIALAKQHGFSIKPIFVPKNEFQGVNSKYDLANAEIVMQDRIKRHWMQQGVIMRLPQTIYIEVDVQFQGECELENGVVLRGKTLIENSHIKAHSVVENSTIRYSTIGPFARIRPQSMIQESHIGNFVEVKKSSLNGVKAGHLSYLGDATIDEGTNIGAGTITCNYDGKAKYQTIIGKNVFVGSDTQLIAPVKIEDDVLIAAGTTVTKDIPKGALAISRTPLKIVKDFYYKFFGKN</sequence>
<accession>A6Q403</accession>
<dbReference type="EC" id="2.7.7.23" evidence="1"/>
<dbReference type="EC" id="2.3.1.157" evidence="1"/>
<dbReference type="EMBL" id="AP009178">
    <property type="protein sequence ID" value="BAF70212.1"/>
    <property type="molecule type" value="Genomic_DNA"/>
</dbReference>
<dbReference type="RefSeq" id="WP_012082475.1">
    <property type="nucleotide sequence ID" value="NC_009662.1"/>
</dbReference>
<dbReference type="SMR" id="A6Q403"/>
<dbReference type="FunCoup" id="A6Q403">
    <property type="interactions" value="427"/>
</dbReference>
<dbReference type="STRING" id="387092.NIS_1103"/>
<dbReference type="KEGG" id="nis:NIS_1103"/>
<dbReference type="eggNOG" id="COG1207">
    <property type="taxonomic scope" value="Bacteria"/>
</dbReference>
<dbReference type="HOGENOM" id="CLU_029499_15_2_7"/>
<dbReference type="InParanoid" id="A6Q403"/>
<dbReference type="OrthoDB" id="9775031at2"/>
<dbReference type="UniPathway" id="UPA00113">
    <property type="reaction ID" value="UER00532"/>
</dbReference>
<dbReference type="UniPathway" id="UPA00113">
    <property type="reaction ID" value="UER00533"/>
</dbReference>
<dbReference type="UniPathway" id="UPA00973"/>
<dbReference type="Proteomes" id="UP000001118">
    <property type="component" value="Chromosome"/>
</dbReference>
<dbReference type="GO" id="GO:0005737">
    <property type="term" value="C:cytoplasm"/>
    <property type="evidence" value="ECO:0007669"/>
    <property type="project" value="UniProtKB-SubCell"/>
</dbReference>
<dbReference type="GO" id="GO:0016020">
    <property type="term" value="C:membrane"/>
    <property type="evidence" value="ECO:0007669"/>
    <property type="project" value="GOC"/>
</dbReference>
<dbReference type="GO" id="GO:0019134">
    <property type="term" value="F:glucosamine-1-phosphate N-acetyltransferase activity"/>
    <property type="evidence" value="ECO:0007669"/>
    <property type="project" value="UniProtKB-UniRule"/>
</dbReference>
<dbReference type="GO" id="GO:0000287">
    <property type="term" value="F:magnesium ion binding"/>
    <property type="evidence" value="ECO:0007669"/>
    <property type="project" value="UniProtKB-UniRule"/>
</dbReference>
<dbReference type="GO" id="GO:0003977">
    <property type="term" value="F:UDP-N-acetylglucosamine diphosphorylase activity"/>
    <property type="evidence" value="ECO:0007669"/>
    <property type="project" value="UniProtKB-UniRule"/>
</dbReference>
<dbReference type="GO" id="GO:0000902">
    <property type="term" value="P:cell morphogenesis"/>
    <property type="evidence" value="ECO:0007669"/>
    <property type="project" value="UniProtKB-UniRule"/>
</dbReference>
<dbReference type="GO" id="GO:0071555">
    <property type="term" value="P:cell wall organization"/>
    <property type="evidence" value="ECO:0007669"/>
    <property type="project" value="UniProtKB-KW"/>
</dbReference>
<dbReference type="GO" id="GO:0009245">
    <property type="term" value="P:lipid A biosynthetic process"/>
    <property type="evidence" value="ECO:0007669"/>
    <property type="project" value="UniProtKB-UniRule"/>
</dbReference>
<dbReference type="GO" id="GO:0009252">
    <property type="term" value="P:peptidoglycan biosynthetic process"/>
    <property type="evidence" value="ECO:0007669"/>
    <property type="project" value="UniProtKB-UniRule"/>
</dbReference>
<dbReference type="GO" id="GO:0008360">
    <property type="term" value="P:regulation of cell shape"/>
    <property type="evidence" value="ECO:0007669"/>
    <property type="project" value="UniProtKB-KW"/>
</dbReference>
<dbReference type="GO" id="GO:0006048">
    <property type="term" value="P:UDP-N-acetylglucosamine biosynthetic process"/>
    <property type="evidence" value="ECO:0007669"/>
    <property type="project" value="UniProtKB-UniPathway"/>
</dbReference>
<dbReference type="CDD" id="cd02540">
    <property type="entry name" value="GT2_GlmU_N_bac"/>
    <property type="match status" value="1"/>
</dbReference>
<dbReference type="CDD" id="cd03353">
    <property type="entry name" value="LbH_GlmU_C"/>
    <property type="match status" value="1"/>
</dbReference>
<dbReference type="Gene3D" id="2.160.10.10">
    <property type="entry name" value="Hexapeptide repeat proteins"/>
    <property type="match status" value="1"/>
</dbReference>
<dbReference type="Gene3D" id="3.90.550.10">
    <property type="entry name" value="Spore Coat Polysaccharide Biosynthesis Protein SpsA, Chain A"/>
    <property type="match status" value="1"/>
</dbReference>
<dbReference type="HAMAP" id="MF_01631">
    <property type="entry name" value="GlmU"/>
    <property type="match status" value="1"/>
</dbReference>
<dbReference type="InterPro" id="IPR005882">
    <property type="entry name" value="Bifunctional_GlmU"/>
</dbReference>
<dbReference type="InterPro" id="IPR050065">
    <property type="entry name" value="GlmU-like"/>
</dbReference>
<dbReference type="InterPro" id="IPR038009">
    <property type="entry name" value="GlmU_C_LbH"/>
</dbReference>
<dbReference type="InterPro" id="IPR001451">
    <property type="entry name" value="Hexapep"/>
</dbReference>
<dbReference type="InterPro" id="IPR018357">
    <property type="entry name" value="Hexapep_transf_CS"/>
</dbReference>
<dbReference type="InterPro" id="IPR025877">
    <property type="entry name" value="MobA-like_NTP_Trfase"/>
</dbReference>
<dbReference type="InterPro" id="IPR029044">
    <property type="entry name" value="Nucleotide-diphossugar_trans"/>
</dbReference>
<dbReference type="InterPro" id="IPR011004">
    <property type="entry name" value="Trimer_LpxA-like_sf"/>
</dbReference>
<dbReference type="NCBIfam" id="TIGR01173">
    <property type="entry name" value="glmU"/>
    <property type="match status" value="1"/>
</dbReference>
<dbReference type="NCBIfam" id="NF010939">
    <property type="entry name" value="PRK14359.1"/>
    <property type="match status" value="1"/>
</dbReference>
<dbReference type="PANTHER" id="PTHR43584:SF3">
    <property type="entry name" value="BIFUNCTIONAL PROTEIN GLMU"/>
    <property type="match status" value="1"/>
</dbReference>
<dbReference type="PANTHER" id="PTHR43584">
    <property type="entry name" value="NUCLEOTIDYL TRANSFERASE"/>
    <property type="match status" value="1"/>
</dbReference>
<dbReference type="Pfam" id="PF00132">
    <property type="entry name" value="Hexapep"/>
    <property type="match status" value="1"/>
</dbReference>
<dbReference type="Pfam" id="PF12804">
    <property type="entry name" value="NTP_transf_3"/>
    <property type="match status" value="1"/>
</dbReference>
<dbReference type="SUPFAM" id="SSF53448">
    <property type="entry name" value="Nucleotide-diphospho-sugar transferases"/>
    <property type="match status" value="1"/>
</dbReference>
<dbReference type="SUPFAM" id="SSF51161">
    <property type="entry name" value="Trimeric LpxA-like enzymes"/>
    <property type="match status" value="1"/>
</dbReference>
<dbReference type="PROSITE" id="PS00101">
    <property type="entry name" value="HEXAPEP_TRANSFERASES"/>
    <property type="match status" value="1"/>
</dbReference>
<name>GLMU_NITSB</name>